<protein>
    <recommendedName>
        <fullName>Protein O-mannose kinase</fullName>
        <shortName>POMK</shortName>
        <ecNumber>2.7.1.183</ecNumber>
    </recommendedName>
    <alternativeName>
        <fullName>Protein kinase-like protein SgK196</fullName>
    </alternativeName>
    <alternativeName>
        <fullName>Sugen kinase 196</fullName>
    </alternativeName>
</protein>
<comment type="function">
    <text evidence="1">Protein O-mannose kinase that specifically mediates phosphorylation at the 6-position of an O-mannose of the trisaccharide (N-acetylgalactosamine (GalNAc)-beta-1,3-N-acetylglucosamine (GlcNAc)-beta-1,4-mannose) to generate phosphorylated O-mannosyl trisaccharide (N-acetylgalactosamine-beta-1,3-N-acetylglucosamine-beta-1,4-(phosphate-6-)mannose). Phosphorylated O-mannosyl trisaccharide is a carbohydrate structure present in alpha-dystroglycan (DAG1), which is required for binding laminin G-like domain-containing extracellular proteins with high affinity. Only shows kinase activity when the GalNAc-beta-3-GlcNAc-beta-terminus is linked to the 4-position of O-mannose, suggesting that this disaccharide serves as the substrate recognition motif (By similarity).</text>
</comment>
<comment type="catalytic activity">
    <reaction>
        <text>3-O-[beta-D-GalNAc-(1-&gt;3)-beta-D-GlcNAc-(1-&gt;4)-alpha-D-Man]-L-Thr-[protein] + ATP = 3-O-[beta-D-GalNAc-(1-&gt;3)-beta-D-GlcNAc-(1-&gt;4)-(O-6-P-alpha-D-Man)]-Thr-[protein] + ADP + H(+)</text>
        <dbReference type="Rhea" id="RHEA:52616"/>
        <dbReference type="Rhea" id="RHEA-COMP:13308"/>
        <dbReference type="Rhea" id="RHEA-COMP:13309"/>
        <dbReference type="ChEBI" id="CHEBI:15378"/>
        <dbReference type="ChEBI" id="CHEBI:30616"/>
        <dbReference type="ChEBI" id="CHEBI:136709"/>
        <dbReference type="ChEBI" id="CHEBI:136710"/>
        <dbReference type="ChEBI" id="CHEBI:456216"/>
        <dbReference type="EC" id="2.7.1.183"/>
    </reaction>
</comment>
<comment type="subcellular location">
    <subcellularLocation>
        <location evidence="1">Endoplasmic reticulum membrane</location>
        <topology evidence="1">Single-pass type II membrane protein</topology>
    </subcellularLocation>
</comment>
<comment type="similarity">
    <text evidence="3">Belongs to the protein kinase superfamily. Ser/Thr protein kinase family. STKL subfamily.</text>
</comment>
<comment type="caution">
    <text evidence="4">Although related to the Ser/Thr protein kinase family, has no protein kinase activity and acts as a mannose kinase instead.</text>
</comment>
<sequence length="349" mass="40054">MGQQHGARNGLTHRELPRGMGLLLAMALMNVVLYVCLDHLFISPGRATEDPRRCPPGYFRMGRMRNCSRWLSCEELRTEVRQLKLVGEGAVKRVFLSEWNEHKVALSRLTRLEMKEDFLHGLRMLTSLQSQHVVTLAGFCEEDGTILTEYHPLGSLSNLEETLNLSKYRDVNTWQHRLRLAVEYVSIINYLHHSPLGTRVMCDSNDLPKTLSQYLLTSNFSIVANDLDALPLVDHGSRVLVKCGHRELHGDFVAPEQLWPYGEDTPFQDDLMPPYDEKIDIWKIPDVSSFLLGHVEGSDMVRFHLFDIHKACKNQFPAERPTAQNVLDAYQKVFHSLRDTVMSQTKEML</sequence>
<name>SG196_RAT</name>
<feature type="chain" id="PRO_0000262999" description="Protein O-mannose kinase">
    <location>
        <begin position="1"/>
        <end position="349"/>
    </location>
</feature>
<feature type="topological domain" description="Cytoplasmic" evidence="2">
    <location>
        <begin position="1"/>
        <end position="19"/>
    </location>
</feature>
<feature type="transmembrane region" description="Helical; Signal-anchor for type II membrane protein" evidence="2">
    <location>
        <begin position="20"/>
        <end position="42"/>
    </location>
</feature>
<feature type="topological domain" description="Lumenal" evidence="2">
    <location>
        <begin position="43"/>
        <end position="349"/>
    </location>
</feature>
<feature type="domain" description="Protein kinase" evidence="3">
    <location>
        <begin position="80"/>
        <end position="349"/>
    </location>
</feature>
<feature type="glycosylation site" description="N-linked (GlcNAc...) asparagine" evidence="2">
    <location>
        <position position="66"/>
    </location>
</feature>
<feature type="glycosylation site" description="N-linked (GlcNAc...) asparagine" evidence="2">
    <location>
        <position position="164"/>
    </location>
</feature>
<feature type="glycosylation site" description="N-linked (GlcNAc...) asparagine" evidence="2">
    <location>
        <position position="219"/>
    </location>
</feature>
<accession>Q4V8A9</accession>
<reference key="1">
    <citation type="journal article" date="2004" name="Genome Res.">
        <title>The status, quality, and expansion of the NIH full-length cDNA project: the Mammalian Gene Collection (MGC).</title>
        <authorList>
            <consortium name="The MGC Project Team"/>
        </authorList>
    </citation>
    <scope>NUCLEOTIDE SEQUENCE [LARGE SCALE MRNA]</scope>
    <source>
        <tissue>Testis</tissue>
    </source>
</reference>
<gene>
    <name type="primary">Pomk</name>
    <name type="synonym">Sgk196</name>
</gene>
<evidence type="ECO:0000250" key="1"/>
<evidence type="ECO:0000255" key="2"/>
<evidence type="ECO:0000255" key="3">
    <source>
        <dbReference type="PROSITE-ProRule" id="PRU00159"/>
    </source>
</evidence>
<evidence type="ECO:0000305" key="4"/>
<dbReference type="EC" id="2.7.1.183"/>
<dbReference type="EMBL" id="BC097466">
    <property type="protein sequence ID" value="AAH97466.1"/>
    <property type="molecule type" value="mRNA"/>
</dbReference>
<dbReference type="RefSeq" id="NP_001020054.1">
    <property type="nucleotide sequence ID" value="NM_001024883.1"/>
</dbReference>
<dbReference type="RefSeq" id="XP_008769575.1">
    <property type="nucleotide sequence ID" value="XM_008771353.4"/>
</dbReference>
<dbReference type="RefSeq" id="XP_017455632.1">
    <property type="nucleotide sequence ID" value="XM_017600143.1"/>
</dbReference>
<dbReference type="RefSeq" id="XP_017455633.1">
    <property type="nucleotide sequence ID" value="XM_017600144.1"/>
</dbReference>
<dbReference type="RefSeq" id="XP_038950484.1">
    <property type="nucleotide sequence ID" value="XM_039094556.2"/>
</dbReference>
<dbReference type="RefSeq" id="XP_038950485.1">
    <property type="nucleotide sequence ID" value="XM_039094557.2"/>
</dbReference>
<dbReference type="RefSeq" id="XP_038950486.1">
    <property type="nucleotide sequence ID" value="XM_039094558.2"/>
</dbReference>
<dbReference type="SMR" id="Q4V8A9"/>
<dbReference type="FunCoup" id="Q4V8A9">
    <property type="interactions" value="1623"/>
</dbReference>
<dbReference type="STRING" id="10116.ENSRNOP00000019630"/>
<dbReference type="GlyCosmos" id="Q4V8A9">
    <property type="glycosylation" value="3 sites, No reported glycans"/>
</dbReference>
<dbReference type="GlyGen" id="Q4V8A9">
    <property type="glycosylation" value="3 sites"/>
</dbReference>
<dbReference type="PhosphoSitePlus" id="Q4V8A9"/>
<dbReference type="PaxDb" id="10116-ENSRNOP00000019630"/>
<dbReference type="Ensembl" id="ENSRNOT00000019630.8">
    <property type="protein sequence ID" value="ENSRNOP00000019630.4"/>
    <property type="gene ID" value="ENSRNOG00000014628.8"/>
</dbReference>
<dbReference type="GeneID" id="306549"/>
<dbReference type="KEGG" id="rno:306549"/>
<dbReference type="UCSC" id="RGD:1310810">
    <property type="organism name" value="rat"/>
</dbReference>
<dbReference type="AGR" id="RGD:1310810"/>
<dbReference type="CTD" id="84197"/>
<dbReference type="RGD" id="1310810">
    <property type="gene designation" value="Pomk"/>
</dbReference>
<dbReference type="eggNOG" id="ENOG502QQQV">
    <property type="taxonomic scope" value="Eukaryota"/>
</dbReference>
<dbReference type="GeneTree" id="ENSGT00390000004945"/>
<dbReference type="HOGENOM" id="CLU_067581_0_0_1"/>
<dbReference type="InParanoid" id="Q4V8A9"/>
<dbReference type="OMA" id="NTWHRRL"/>
<dbReference type="OrthoDB" id="4062651at2759"/>
<dbReference type="PhylomeDB" id="Q4V8A9"/>
<dbReference type="TreeFam" id="TF328472"/>
<dbReference type="Reactome" id="R-RNO-5173105">
    <property type="pathway name" value="O-linked glycosylation"/>
</dbReference>
<dbReference type="PRO" id="PR:Q4V8A9"/>
<dbReference type="Proteomes" id="UP000002494">
    <property type="component" value="Chromosome 16"/>
</dbReference>
<dbReference type="Bgee" id="ENSRNOG00000014628">
    <property type="expression patterns" value="Expressed in pancreas and 20 other cell types or tissues"/>
</dbReference>
<dbReference type="GO" id="GO:0005789">
    <property type="term" value="C:endoplasmic reticulum membrane"/>
    <property type="evidence" value="ECO:0000266"/>
    <property type="project" value="RGD"/>
</dbReference>
<dbReference type="GO" id="GO:0005524">
    <property type="term" value="F:ATP binding"/>
    <property type="evidence" value="ECO:0007669"/>
    <property type="project" value="UniProtKB-KW"/>
</dbReference>
<dbReference type="GO" id="GO:0019200">
    <property type="term" value="F:carbohydrate kinase activity"/>
    <property type="evidence" value="ECO:0000266"/>
    <property type="project" value="RGD"/>
</dbReference>
<dbReference type="GO" id="GO:0016773">
    <property type="term" value="F:phosphotransferase activity, alcohol group as acceptor"/>
    <property type="evidence" value="ECO:0000250"/>
    <property type="project" value="UniProtKB"/>
</dbReference>
<dbReference type="GO" id="GO:0004672">
    <property type="term" value="F:protein kinase activity"/>
    <property type="evidence" value="ECO:0007669"/>
    <property type="project" value="InterPro"/>
</dbReference>
<dbReference type="GO" id="GO:0007420">
    <property type="term" value="P:brain development"/>
    <property type="evidence" value="ECO:0000266"/>
    <property type="project" value="RGD"/>
</dbReference>
<dbReference type="GO" id="GO:0046835">
    <property type="term" value="P:carbohydrate phosphorylation"/>
    <property type="evidence" value="ECO:0000250"/>
    <property type="project" value="UniProtKB"/>
</dbReference>
<dbReference type="GO" id="GO:0007611">
    <property type="term" value="P:learning or memory"/>
    <property type="evidence" value="ECO:0000266"/>
    <property type="project" value="RGD"/>
</dbReference>
<dbReference type="GO" id="GO:0050905">
    <property type="term" value="P:neuromuscular process"/>
    <property type="evidence" value="ECO:0000266"/>
    <property type="project" value="RGD"/>
</dbReference>
<dbReference type="GO" id="GO:0006493">
    <property type="term" value="P:protein O-linked glycosylation"/>
    <property type="evidence" value="ECO:0000250"/>
    <property type="project" value="UniProtKB"/>
</dbReference>
<dbReference type="GO" id="GO:0019233">
    <property type="term" value="P:sensory perception of pain"/>
    <property type="evidence" value="ECO:0000266"/>
    <property type="project" value="RGD"/>
</dbReference>
<dbReference type="FunFam" id="1.10.510.10:FF:000464">
    <property type="entry name" value="Protein O-mannose kinase"/>
    <property type="match status" value="1"/>
</dbReference>
<dbReference type="Gene3D" id="1.10.510.10">
    <property type="entry name" value="Transferase(Phosphotransferase) domain 1"/>
    <property type="match status" value="1"/>
</dbReference>
<dbReference type="InterPro" id="IPR011009">
    <property type="entry name" value="Kinase-like_dom_sf"/>
</dbReference>
<dbReference type="InterPro" id="IPR039318">
    <property type="entry name" value="POMK"/>
</dbReference>
<dbReference type="InterPro" id="IPR000719">
    <property type="entry name" value="Prot_kinase_dom"/>
</dbReference>
<dbReference type="InterPro" id="IPR001245">
    <property type="entry name" value="Ser-Thr/Tyr_kinase_cat_dom"/>
</dbReference>
<dbReference type="PANTHER" id="PTHR22618">
    <property type="entry name" value="PROTEIN O-MANNOSE KINASE"/>
    <property type="match status" value="1"/>
</dbReference>
<dbReference type="PANTHER" id="PTHR22618:SF2">
    <property type="entry name" value="PROTEIN O-MANNOSE KINASE"/>
    <property type="match status" value="1"/>
</dbReference>
<dbReference type="Pfam" id="PF07714">
    <property type="entry name" value="PK_Tyr_Ser-Thr"/>
    <property type="match status" value="1"/>
</dbReference>
<dbReference type="SMART" id="SM00220">
    <property type="entry name" value="S_TKc"/>
    <property type="match status" value="1"/>
</dbReference>
<dbReference type="SUPFAM" id="SSF56112">
    <property type="entry name" value="Protein kinase-like (PK-like)"/>
    <property type="match status" value="1"/>
</dbReference>
<dbReference type="PROSITE" id="PS50011">
    <property type="entry name" value="PROTEIN_KINASE_DOM"/>
    <property type="match status" value="1"/>
</dbReference>
<keyword id="KW-0067">ATP-binding</keyword>
<keyword id="KW-0256">Endoplasmic reticulum</keyword>
<keyword id="KW-0325">Glycoprotein</keyword>
<keyword id="KW-0418">Kinase</keyword>
<keyword id="KW-0472">Membrane</keyword>
<keyword id="KW-0547">Nucleotide-binding</keyword>
<keyword id="KW-1185">Reference proteome</keyword>
<keyword id="KW-0735">Signal-anchor</keyword>
<keyword id="KW-0808">Transferase</keyword>
<keyword id="KW-0812">Transmembrane</keyword>
<keyword id="KW-1133">Transmembrane helix</keyword>
<proteinExistence type="evidence at transcript level"/>
<organism>
    <name type="scientific">Rattus norvegicus</name>
    <name type="common">Rat</name>
    <dbReference type="NCBI Taxonomy" id="10116"/>
    <lineage>
        <taxon>Eukaryota</taxon>
        <taxon>Metazoa</taxon>
        <taxon>Chordata</taxon>
        <taxon>Craniata</taxon>
        <taxon>Vertebrata</taxon>
        <taxon>Euteleostomi</taxon>
        <taxon>Mammalia</taxon>
        <taxon>Eutheria</taxon>
        <taxon>Euarchontoglires</taxon>
        <taxon>Glires</taxon>
        <taxon>Rodentia</taxon>
        <taxon>Myomorpha</taxon>
        <taxon>Muroidea</taxon>
        <taxon>Muridae</taxon>
        <taxon>Murinae</taxon>
        <taxon>Rattus</taxon>
    </lineage>
</organism>